<keyword id="KW-0460">Magnesium</keyword>
<keyword id="KW-0479">Metal-binding</keyword>
<keyword id="KW-1185">Reference proteome</keyword>
<keyword id="KW-0784">Thiamine biosynthesis</keyword>
<keyword id="KW-0808">Transferase</keyword>
<evidence type="ECO:0000255" key="1">
    <source>
        <dbReference type="HAMAP-Rule" id="MF_00097"/>
    </source>
</evidence>
<name>THIE_CLOPE</name>
<protein>
    <recommendedName>
        <fullName evidence="1">Thiamine-phosphate synthase</fullName>
        <shortName evidence="1">TP synthase</shortName>
        <shortName evidence="1">TPS</shortName>
        <ecNumber evidence="1">2.5.1.3</ecNumber>
    </recommendedName>
    <alternativeName>
        <fullName evidence="1">Thiamine-phosphate pyrophosphorylase</fullName>
        <shortName evidence="1">TMP pyrophosphorylase</shortName>
        <shortName evidence="1">TMP-PPase</shortName>
    </alternativeName>
</protein>
<organism>
    <name type="scientific">Clostridium perfringens (strain 13 / Type A)</name>
    <dbReference type="NCBI Taxonomy" id="195102"/>
    <lineage>
        <taxon>Bacteria</taxon>
        <taxon>Bacillati</taxon>
        <taxon>Bacillota</taxon>
        <taxon>Clostridia</taxon>
        <taxon>Eubacteriales</taxon>
        <taxon>Clostridiaceae</taxon>
        <taxon>Clostridium</taxon>
    </lineage>
</organism>
<sequence>MSNKDYKKLYLVTDYRIPFNELLEKTKEALIGGVSIVQYRAKNKKTKEMCKEAKELKKLCDEFGALFLVNDRIDVALAVKANGVHIGQDDMEVSIAREIMPKDAVIGVTVHNKEEALKAIKEGADNLGVGALFSTNSKDDATLMTLETLREIKSVSNIPLYGIGGITPYNLNKDILENLDGVAVISALLNSDNIREKSKEFLNILSK</sequence>
<proteinExistence type="inferred from homology"/>
<dbReference type="EC" id="2.5.1.3" evidence="1"/>
<dbReference type="EMBL" id="BA000016">
    <property type="protein sequence ID" value="BAB81042.1"/>
    <property type="molecule type" value="Genomic_DNA"/>
</dbReference>
<dbReference type="RefSeq" id="WP_011010394.1">
    <property type="nucleotide sequence ID" value="NC_003366.1"/>
</dbReference>
<dbReference type="SMR" id="Q8XKQ8"/>
<dbReference type="STRING" id="195102.gene:10490599"/>
<dbReference type="KEGG" id="cpe:CPE1336"/>
<dbReference type="HOGENOM" id="CLU_018272_3_2_9"/>
<dbReference type="UniPathway" id="UPA00060">
    <property type="reaction ID" value="UER00141"/>
</dbReference>
<dbReference type="Proteomes" id="UP000000818">
    <property type="component" value="Chromosome"/>
</dbReference>
<dbReference type="GO" id="GO:0005737">
    <property type="term" value="C:cytoplasm"/>
    <property type="evidence" value="ECO:0007669"/>
    <property type="project" value="TreeGrafter"/>
</dbReference>
<dbReference type="GO" id="GO:0000287">
    <property type="term" value="F:magnesium ion binding"/>
    <property type="evidence" value="ECO:0007669"/>
    <property type="project" value="UniProtKB-UniRule"/>
</dbReference>
<dbReference type="GO" id="GO:0004789">
    <property type="term" value="F:thiamine-phosphate diphosphorylase activity"/>
    <property type="evidence" value="ECO:0007669"/>
    <property type="project" value="UniProtKB-UniRule"/>
</dbReference>
<dbReference type="GO" id="GO:0009228">
    <property type="term" value="P:thiamine biosynthetic process"/>
    <property type="evidence" value="ECO:0007669"/>
    <property type="project" value="UniProtKB-KW"/>
</dbReference>
<dbReference type="GO" id="GO:0009229">
    <property type="term" value="P:thiamine diphosphate biosynthetic process"/>
    <property type="evidence" value="ECO:0007669"/>
    <property type="project" value="UniProtKB-UniRule"/>
</dbReference>
<dbReference type="CDD" id="cd00564">
    <property type="entry name" value="TMP_TenI"/>
    <property type="match status" value="1"/>
</dbReference>
<dbReference type="FunFam" id="3.20.20.70:FF:000096">
    <property type="entry name" value="Thiamine-phosphate synthase"/>
    <property type="match status" value="1"/>
</dbReference>
<dbReference type="Gene3D" id="3.20.20.70">
    <property type="entry name" value="Aldolase class I"/>
    <property type="match status" value="1"/>
</dbReference>
<dbReference type="HAMAP" id="MF_00097">
    <property type="entry name" value="TMP_synthase"/>
    <property type="match status" value="1"/>
</dbReference>
<dbReference type="InterPro" id="IPR013785">
    <property type="entry name" value="Aldolase_TIM"/>
</dbReference>
<dbReference type="InterPro" id="IPR036206">
    <property type="entry name" value="ThiamineP_synth_sf"/>
</dbReference>
<dbReference type="InterPro" id="IPR022998">
    <property type="entry name" value="ThiamineP_synth_TenI"/>
</dbReference>
<dbReference type="InterPro" id="IPR034291">
    <property type="entry name" value="TMP_synthase"/>
</dbReference>
<dbReference type="NCBIfam" id="TIGR00693">
    <property type="entry name" value="thiE"/>
    <property type="match status" value="1"/>
</dbReference>
<dbReference type="PANTHER" id="PTHR20857:SF23">
    <property type="entry name" value="THIAMINE BIOSYNTHETIC BIFUNCTIONAL ENZYME"/>
    <property type="match status" value="1"/>
</dbReference>
<dbReference type="PANTHER" id="PTHR20857">
    <property type="entry name" value="THIAMINE-PHOSPHATE PYROPHOSPHORYLASE"/>
    <property type="match status" value="1"/>
</dbReference>
<dbReference type="Pfam" id="PF02581">
    <property type="entry name" value="TMP-TENI"/>
    <property type="match status" value="1"/>
</dbReference>
<dbReference type="SUPFAM" id="SSF51391">
    <property type="entry name" value="Thiamin phosphate synthase"/>
    <property type="match status" value="1"/>
</dbReference>
<feature type="chain" id="PRO_0000157006" description="Thiamine-phosphate synthase">
    <location>
        <begin position="1"/>
        <end position="207"/>
    </location>
</feature>
<feature type="binding site" evidence="1">
    <location>
        <begin position="38"/>
        <end position="42"/>
    </location>
    <ligand>
        <name>4-amino-2-methyl-5-(diphosphooxymethyl)pyrimidine</name>
        <dbReference type="ChEBI" id="CHEBI:57841"/>
    </ligand>
</feature>
<feature type="binding site" evidence="1">
    <location>
        <position position="70"/>
    </location>
    <ligand>
        <name>4-amino-2-methyl-5-(diphosphooxymethyl)pyrimidine</name>
        <dbReference type="ChEBI" id="CHEBI:57841"/>
    </ligand>
</feature>
<feature type="binding site" evidence="1">
    <location>
        <position position="71"/>
    </location>
    <ligand>
        <name>Mg(2+)</name>
        <dbReference type="ChEBI" id="CHEBI:18420"/>
    </ligand>
</feature>
<feature type="binding site" evidence="1">
    <location>
        <position position="90"/>
    </location>
    <ligand>
        <name>Mg(2+)</name>
        <dbReference type="ChEBI" id="CHEBI:18420"/>
    </ligand>
</feature>
<feature type="binding site" evidence="1">
    <location>
        <position position="109"/>
    </location>
    <ligand>
        <name>4-amino-2-methyl-5-(diphosphooxymethyl)pyrimidine</name>
        <dbReference type="ChEBI" id="CHEBI:57841"/>
    </ligand>
</feature>
<feature type="binding site" evidence="1">
    <location>
        <begin position="135"/>
        <end position="137"/>
    </location>
    <ligand>
        <name>2-[(2R,5Z)-2-carboxy-4-methylthiazol-5(2H)-ylidene]ethyl phosphate</name>
        <dbReference type="ChEBI" id="CHEBI:62899"/>
    </ligand>
</feature>
<feature type="binding site" evidence="1">
    <location>
        <position position="138"/>
    </location>
    <ligand>
        <name>4-amino-2-methyl-5-(diphosphooxymethyl)pyrimidine</name>
        <dbReference type="ChEBI" id="CHEBI:57841"/>
    </ligand>
</feature>
<feature type="binding site" evidence="1">
    <location>
        <position position="165"/>
    </location>
    <ligand>
        <name>2-[(2R,5Z)-2-carboxy-4-methylthiazol-5(2H)-ylidene]ethyl phosphate</name>
        <dbReference type="ChEBI" id="CHEBI:62899"/>
    </ligand>
</feature>
<feature type="binding site" evidence="1">
    <location>
        <begin position="185"/>
        <end position="186"/>
    </location>
    <ligand>
        <name>2-[(2R,5Z)-2-carboxy-4-methylthiazol-5(2H)-ylidene]ethyl phosphate</name>
        <dbReference type="ChEBI" id="CHEBI:62899"/>
    </ligand>
</feature>
<reference key="1">
    <citation type="journal article" date="2002" name="Proc. Natl. Acad. Sci. U.S.A.">
        <title>Complete genome sequence of Clostridium perfringens, an anaerobic flesh-eater.</title>
        <authorList>
            <person name="Shimizu T."/>
            <person name="Ohtani K."/>
            <person name="Hirakawa H."/>
            <person name="Ohshima K."/>
            <person name="Yamashita A."/>
            <person name="Shiba T."/>
            <person name="Ogasawara N."/>
            <person name="Hattori M."/>
            <person name="Kuhara S."/>
            <person name="Hayashi H."/>
        </authorList>
    </citation>
    <scope>NUCLEOTIDE SEQUENCE [LARGE SCALE GENOMIC DNA]</scope>
    <source>
        <strain>13 / Type A</strain>
    </source>
</reference>
<gene>
    <name evidence="1" type="primary">thiE</name>
    <name type="ordered locus">CPE1336</name>
</gene>
<accession>Q8XKQ8</accession>
<comment type="function">
    <text evidence="1">Condenses 4-methyl-5-(beta-hydroxyethyl)thiazole monophosphate (THZ-P) and 2-methyl-4-amino-5-hydroxymethyl pyrimidine pyrophosphate (HMP-PP) to form thiamine monophosphate (TMP).</text>
</comment>
<comment type="catalytic activity">
    <reaction evidence="1">
        <text>2-[(2R,5Z)-2-carboxy-4-methylthiazol-5(2H)-ylidene]ethyl phosphate + 4-amino-2-methyl-5-(diphosphooxymethyl)pyrimidine + 2 H(+) = thiamine phosphate + CO2 + diphosphate</text>
        <dbReference type="Rhea" id="RHEA:47844"/>
        <dbReference type="ChEBI" id="CHEBI:15378"/>
        <dbReference type="ChEBI" id="CHEBI:16526"/>
        <dbReference type="ChEBI" id="CHEBI:33019"/>
        <dbReference type="ChEBI" id="CHEBI:37575"/>
        <dbReference type="ChEBI" id="CHEBI:57841"/>
        <dbReference type="ChEBI" id="CHEBI:62899"/>
        <dbReference type="EC" id="2.5.1.3"/>
    </reaction>
</comment>
<comment type="catalytic activity">
    <reaction evidence="1">
        <text>2-(2-carboxy-4-methylthiazol-5-yl)ethyl phosphate + 4-amino-2-methyl-5-(diphosphooxymethyl)pyrimidine + 2 H(+) = thiamine phosphate + CO2 + diphosphate</text>
        <dbReference type="Rhea" id="RHEA:47848"/>
        <dbReference type="ChEBI" id="CHEBI:15378"/>
        <dbReference type="ChEBI" id="CHEBI:16526"/>
        <dbReference type="ChEBI" id="CHEBI:33019"/>
        <dbReference type="ChEBI" id="CHEBI:37575"/>
        <dbReference type="ChEBI" id="CHEBI:57841"/>
        <dbReference type="ChEBI" id="CHEBI:62890"/>
        <dbReference type="EC" id="2.5.1.3"/>
    </reaction>
</comment>
<comment type="catalytic activity">
    <reaction evidence="1">
        <text>4-methyl-5-(2-phosphooxyethyl)-thiazole + 4-amino-2-methyl-5-(diphosphooxymethyl)pyrimidine + H(+) = thiamine phosphate + diphosphate</text>
        <dbReference type="Rhea" id="RHEA:22328"/>
        <dbReference type="ChEBI" id="CHEBI:15378"/>
        <dbReference type="ChEBI" id="CHEBI:33019"/>
        <dbReference type="ChEBI" id="CHEBI:37575"/>
        <dbReference type="ChEBI" id="CHEBI:57841"/>
        <dbReference type="ChEBI" id="CHEBI:58296"/>
        <dbReference type="EC" id="2.5.1.3"/>
    </reaction>
</comment>
<comment type="cofactor">
    <cofactor evidence="1">
        <name>Mg(2+)</name>
        <dbReference type="ChEBI" id="CHEBI:18420"/>
    </cofactor>
    <text evidence="1">Binds 1 Mg(2+) ion per subunit.</text>
</comment>
<comment type="pathway">
    <text evidence="1">Cofactor biosynthesis; thiamine diphosphate biosynthesis; thiamine phosphate from 4-amino-2-methyl-5-diphosphomethylpyrimidine and 4-methyl-5-(2-phosphoethyl)-thiazole: step 1/1.</text>
</comment>
<comment type="similarity">
    <text evidence="1">Belongs to the thiamine-phosphate synthase family.</text>
</comment>